<dbReference type="EC" id="2.7.2.8" evidence="1"/>
<dbReference type="EMBL" id="CP000450">
    <property type="protein sequence ID" value="ABI60598.1"/>
    <property type="molecule type" value="Genomic_DNA"/>
</dbReference>
<dbReference type="RefSeq" id="WP_011635366.1">
    <property type="nucleotide sequence ID" value="NC_008344.1"/>
</dbReference>
<dbReference type="SMR" id="Q0ADI4"/>
<dbReference type="STRING" id="335283.Neut_2384"/>
<dbReference type="KEGG" id="net:Neut_2384"/>
<dbReference type="eggNOG" id="COG0548">
    <property type="taxonomic scope" value="Bacteria"/>
</dbReference>
<dbReference type="HOGENOM" id="CLU_053680_0_0_4"/>
<dbReference type="OrthoDB" id="9803155at2"/>
<dbReference type="UniPathway" id="UPA00068">
    <property type="reaction ID" value="UER00107"/>
</dbReference>
<dbReference type="Proteomes" id="UP000001966">
    <property type="component" value="Chromosome"/>
</dbReference>
<dbReference type="GO" id="GO:0005737">
    <property type="term" value="C:cytoplasm"/>
    <property type="evidence" value="ECO:0007669"/>
    <property type="project" value="UniProtKB-SubCell"/>
</dbReference>
<dbReference type="GO" id="GO:0003991">
    <property type="term" value="F:acetylglutamate kinase activity"/>
    <property type="evidence" value="ECO:0007669"/>
    <property type="project" value="UniProtKB-UniRule"/>
</dbReference>
<dbReference type="GO" id="GO:0005524">
    <property type="term" value="F:ATP binding"/>
    <property type="evidence" value="ECO:0007669"/>
    <property type="project" value="UniProtKB-UniRule"/>
</dbReference>
<dbReference type="GO" id="GO:0042450">
    <property type="term" value="P:arginine biosynthetic process via ornithine"/>
    <property type="evidence" value="ECO:0007669"/>
    <property type="project" value="UniProtKB-UniRule"/>
</dbReference>
<dbReference type="GO" id="GO:0006526">
    <property type="term" value="P:L-arginine biosynthetic process"/>
    <property type="evidence" value="ECO:0007669"/>
    <property type="project" value="UniProtKB-UniPathway"/>
</dbReference>
<dbReference type="CDD" id="cd04250">
    <property type="entry name" value="AAK_NAGK-C"/>
    <property type="match status" value="1"/>
</dbReference>
<dbReference type="FunFam" id="3.40.1160.10:FF:000004">
    <property type="entry name" value="Acetylglutamate kinase"/>
    <property type="match status" value="1"/>
</dbReference>
<dbReference type="Gene3D" id="3.40.1160.10">
    <property type="entry name" value="Acetylglutamate kinase-like"/>
    <property type="match status" value="1"/>
</dbReference>
<dbReference type="HAMAP" id="MF_00082">
    <property type="entry name" value="ArgB"/>
    <property type="match status" value="1"/>
</dbReference>
<dbReference type="InterPro" id="IPR036393">
    <property type="entry name" value="AceGlu_kinase-like_sf"/>
</dbReference>
<dbReference type="InterPro" id="IPR004662">
    <property type="entry name" value="AcgluKinase_fam"/>
</dbReference>
<dbReference type="InterPro" id="IPR037528">
    <property type="entry name" value="ArgB"/>
</dbReference>
<dbReference type="InterPro" id="IPR001048">
    <property type="entry name" value="Asp/Glu/Uridylate_kinase"/>
</dbReference>
<dbReference type="InterPro" id="IPR001057">
    <property type="entry name" value="Glu/AcGlu_kinase"/>
</dbReference>
<dbReference type="InterPro" id="IPR041727">
    <property type="entry name" value="NAGK-C"/>
</dbReference>
<dbReference type="NCBIfam" id="TIGR00761">
    <property type="entry name" value="argB"/>
    <property type="match status" value="1"/>
</dbReference>
<dbReference type="PANTHER" id="PTHR23342">
    <property type="entry name" value="N-ACETYLGLUTAMATE SYNTHASE"/>
    <property type="match status" value="1"/>
</dbReference>
<dbReference type="PANTHER" id="PTHR23342:SF0">
    <property type="entry name" value="N-ACETYLGLUTAMATE SYNTHASE, MITOCHONDRIAL"/>
    <property type="match status" value="1"/>
</dbReference>
<dbReference type="Pfam" id="PF00696">
    <property type="entry name" value="AA_kinase"/>
    <property type="match status" value="1"/>
</dbReference>
<dbReference type="PIRSF" id="PIRSF000728">
    <property type="entry name" value="NAGK"/>
    <property type="match status" value="1"/>
</dbReference>
<dbReference type="PRINTS" id="PR00474">
    <property type="entry name" value="GLU5KINASE"/>
</dbReference>
<dbReference type="SUPFAM" id="SSF53633">
    <property type="entry name" value="Carbamate kinase-like"/>
    <property type="match status" value="1"/>
</dbReference>
<proteinExistence type="inferred from homology"/>
<name>ARGB_NITEC</name>
<feature type="chain" id="PRO_1000010518" description="Acetylglutamate kinase">
    <location>
        <begin position="1"/>
        <end position="295"/>
    </location>
</feature>
<feature type="binding site" evidence="1">
    <location>
        <begin position="67"/>
        <end position="68"/>
    </location>
    <ligand>
        <name>substrate</name>
    </ligand>
</feature>
<feature type="binding site" evidence="1">
    <location>
        <position position="89"/>
    </location>
    <ligand>
        <name>substrate</name>
    </ligand>
</feature>
<feature type="binding site" evidence="1">
    <location>
        <position position="191"/>
    </location>
    <ligand>
        <name>substrate</name>
    </ligand>
</feature>
<feature type="site" description="Transition state stabilizer" evidence="1">
    <location>
        <position position="32"/>
    </location>
</feature>
<feature type="site" description="Transition state stabilizer" evidence="1">
    <location>
        <position position="251"/>
    </location>
</feature>
<reference key="1">
    <citation type="journal article" date="2007" name="Environ. Microbiol.">
        <title>Whole-genome analysis of the ammonia-oxidizing bacterium, Nitrosomonas eutropha C91: implications for niche adaptation.</title>
        <authorList>
            <person name="Stein L.Y."/>
            <person name="Arp D.J."/>
            <person name="Berube P.M."/>
            <person name="Chain P.S."/>
            <person name="Hauser L."/>
            <person name="Jetten M.S."/>
            <person name="Klotz M.G."/>
            <person name="Larimer F.W."/>
            <person name="Norton J.M."/>
            <person name="Op den Camp H.J.M."/>
            <person name="Shin M."/>
            <person name="Wei X."/>
        </authorList>
    </citation>
    <scope>NUCLEOTIDE SEQUENCE [LARGE SCALE GENOMIC DNA]</scope>
    <source>
        <strain>DSM 101675 / C91 / Nm57</strain>
    </source>
</reference>
<comment type="function">
    <text evidence="1">Catalyzes the ATP-dependent phosphorylation of N-acetyl-L-glutamate.</text>
</comment>
<comment type="catalytic activity">
    <reaction evidence="1">
        <text>N-acetyl-L-glutamate + ATP = N-acetyl-L-glutamyl 5-phosphate + ADP</text>
        <dbReference type="Rhea" id="RHEA:14629"/>
        <dbReference type="ChEBI" id="CHEBI:30616"/>
        <dbReference type="ChEBI" id="CHEBI:44337"/>
        <dbReference type="ChEBI" id="CHEBI:57936"/>
        <dbReference type="ChEBI" id="CHEBI:456216"/>
        <dbReference type="EC" id="2.7.2.8"/>
    </reaction>
</comment>
<comment type="pathway">
    <text evidence="1">Amino-acid biosynthesis; L-arginine biosynthesis; N(2)-acetyl-L-ornithine from L-glutamate: step 2/4.</text>
</comment>
<comment type="subcellular location">
    <subcellularLocation>
        <location evidence="1">Cytoplasm</location>
    </subcellularLocation>
</comment>
<comment type="similarity">
    <text evidence="1">Belongs to the acetylglutamate kinase family. ArgB subfamily.</text>
</comment>
<protein>
    <recommendedName>
        <fullName evidence="1">Acetylglutamate kinase</fullName>
        <ecNumber evidence="1">2.7.2.8</ecNumber>
    </recommendedName>
    <alternativeName>
        <fullName evidence="1">N-acetyl-L-glutamate 5-phosphotransferase</fullName>
    </alternativeName>
    <alternativeName>
        <fullName evidence="1">NAG kinase</fullName>
        <shortName evidence="1">NAGK</shortName>
    </alternativeName>
</protein>
<sequence>MQSSLAVNEKVEILAEALPYIRRFHNKTIVIKYGGNAMTEEILKQSFAKDVVLLKLVGMNPVIVHGGGPQIDSMLKRVGKEGVFIQGMRVTDAETMDIVEMILGGLINKEIVNLINRHGGQAVGLTGKDGMFIRAKRMLIKDKEDAEKWINIGQVGEIEYIDPSLIKLLDARDFIPVIAPIGVGEEGESYNINADLVAGRLAETLKAEKLILMTNTPGVLDKNGNLLTGLTASRVDELFADGTISGGMLPKIKSALDAVKNGVKSCHIIDGRVQHALLLEILTDEGVGTLIKSEG</sequence>
<gene>
    <name evidence="1" type="primary">argB</name>
    <name type="ordered locus">Neut_2384</name>
</gene>
<organism>
    <name type="scientific">Nitrosomonas eutropha (strain DSM 101675 / C91 / Nm57)</name>
    <dbReference type="NCBI Taxonomy" id="335283"/>
    <lineage>
        <taxon>Bacteria</taxon>
        <taxon>Pseudomonadati</taxon>
        <taxon>Pseudomonadota</taxon>
        <taxon>Betaproteobacteria</taxon>
        <taxon>Nitrosomonadales</taxon>
        <taxon>Nitrosomonadaceae</taxon>
        <taxon>Nitrosomonas</taxon>
    </lineage>
</organism>
<evidence type="ECO:0000255" key="1">
    <source>
        <dbReference type="HAMAP-Rule" id="MF_00082"/>
    </source>
</evidence>
<keyword id="KW-0028">Amino-acid biosynthesis</keyword>
<keyword id="KW-0055">Arginine biosynthesis</keyword>
<keyword id="KW-0067">ATP-binding</keyword>
<keyword id="KW-0963">Cytoplasm</keyword>
<keyword id="KW-0418">Kinase</keyword>
<keyword id="KW-0547">Nucleotide-binding</keyword>
<keyword id="KW-0808">Transferase</keyword>
<accession>Q0ADI4</accession>